<evidence type="ECO:0000250" key="1"/>
<evidence type="ECO:0000250" key="2">
    <source>
        <dbReference type="UniProtKB" id="P0C1Z0"/>
    </source>
</evidence>
<evidence type="ECO:0000250" key="3">
    <source>
        <dbReference type="UniProtKB" id="P60775"/>
    </source>
</evidence>
<evidence type="ECO:0000305" key="4"/>
<accession>A8S6A4</accession>
<comment type="function">
    <text evidence="3">Binds to muscle nicotinic acetylcholine receptor (nAChR) and inhibit acetylcholine from binding to the receptor, thereby impairing neuromuscular transmission.</text>
</comment>
<comment type="subcellular location">
    <subcellularLocation>
        <location evidence="1">Secreted</location>
    </subcellularLocation>
</comment>
<comment type="tissue specificity">
    <text evidence="4">Expressed by the venom gland.</text>
</comment>
<comment type="similarity">
    <text evidence="4">Belongs to the three-finger toxin family. Short-chain subfamily. Type I alpha-neurotoxin sub-subfamily.</text>
</comment>
<feature type="signal peptide" evidence="1">
    <location>
        <begin position="1"/>
        <end position="21"/>
    </location>
</feature>
<feature type="chain" id="PRO_5000282344" description="Short neurotoxin 1">
    <location>
        <begin position="22"/>
        <end position="81"/>
    </location>
</feature>
<feature type="disulfide bond" evidence="2">
    <location>
        <begin position="24"/>
        <end position="43"/>
    </location>
</feature>
<feature type="disulfide bond" evidence="2">
    <location>
        <begin position="38"/>
        <end position="60"/>
    </location>
</feature>
<feature type="disulfide bond" evidence="2">
    <location>
        <begin position="62"/>
        <end position="73"/>
    </location>
</feature>
<feature type="disulfide bond" evidence="2">
    <location>
        <begin position="74"/>
        <end position="79"/>
    </location>
</feature>
<keyword id="KW-0008">Acetylcholine receptor inhibiting toxin</keyword>
<keyword id="KW-1015">Disulfide bond</keyword>
<keyword id="KW-0872">Ion channel impairing toxin</keyword>
<keyword id="KW-0528">Neurotoxin</keyword>
<keyword id="KW-0629">Postsynaptic neurotoxin</keyword>
<keyword id="KW-0964">Secreted</keyword>
<keyword id="KW-0732">Signal</keyword>
<keyword id="KW-0800">Toxin</keyword>
<dbReference type="EMBL" id="EF599317">
    <property type="protein sequence ID" value="ABW24174.1"/>
    <property type="molecule type" value="mRNA"/>
</dbReference>
<dbReference type="SMR" id="A8S6A4"/>
<dbReference type="GO" id="GO:0005576">
    <property type="term" value="C:extracellular region"/>
    <property type="evidence" value="ECO:0007669"/>
    <property type="project" value="UniProtKB-SubCell"/>
</dbReference>
<dbReference type="GO" id="GO:0030550">
    <property type="term" value="F:acetylcholine receptor inhibitor activity"/>
    <property type="evidence" value="ECO:0007669"/>
    <property type="project" value="UniProtKB-KW"/>
</dbReference>
<dbReference type="GO" id="GO:0099106">
    <property type="term" value="F:ion channel regulator activity"/>
    <property type="evidence" value="ECO:0007669"/>
    <property type="project" value="UniProtKB-KW"/>
</dbReference>
<dbReference type="GO" id="GO:0090729">
    <property type="term" value="F:toxin activity"/>
    <property type="evidence" value="ECO:0007669"/>
    <property type="project" value="UniProtKB-KW"/>
</dbReference>
<dbReference type="CDD" id="cd00206">
    <property type="entry name" value="TFP_snake_toxin"/>
    <property type="match status" value="1"/>
</dbReference>
<dbReference type="Gene3D" id="2.10.60.10">
    <property type="entry name" value="CD59"/>
    <property type="match status" value="1"/>
</dbReference>
<dbReference type="InterPro" id="IPR003571">
    <property type="entry name" value="Snake_3FTx"/>
</dbReference>
<dbReference type="InterPro" id="IPR045860">
    <property type="entry name" value="Snake_toxin-like_sf"/>
</dbReference>
<dbReference type="InterPro" id="IPR018354">
    <property type="entry name" value="Snake_toxin_con_site"/>
</dbReference>
<dbReference type="InterPro" id="IPR054131">
    <property type="entry name" value="Toxin_cobra-type"/>
</dbReference>
<dbReference type="Pfam" id="PF21947">
    <property type="entry name" value="Toxin_cobra-type"/>
    <property type="match status" value="1"/>
</dbReference>
<dbReference type="SUPFAM" id="SSF57302">
    <property type="entry name" value="Snake toxin-like"/>
    <property type="match status" value="1"/>
</dbReference>
<dbReference type="PROSITE" id="PS00272">
    <property type="entry name" value="SNAKE_TOXIN"/>
    <property type="match status" value="1"/>
</dbReference>
<organism>
    <name type="scientific">Austrelaps superbus</name>
    <name type="common">Lowland copperhead snake</name>
    <name type="synonym">Hoplocephalus superbus</name>
    <dbReference type="NCBI Taxonomy" id="29156"/>
    <lineage>
        <taxon>Eukaryota</taxon>
        <taxon>Metazoa</taxon>
        <taxon>Chordata</taxon>
        <taxon>Craniata</taxon>
        <taxon>Vertebrata</taxon>
        <taxon>Euteleostomi</taxon>
        <taxon>Lepidosauria</taxon>
        <taxon>Squamata</taxon>
        <taxon>Bifurcata</taxon>
        <taxon>Unidentata</taxon>
        <taxon>Episquamata</taxon>
        <taxon>Toxicofera</taxon>
        <taxon>Serpentes</taxon>
        <taxon>Colubroidea</taxon>
        <taxon>Elapidae</taxon>
        <taxon>Hydrophiinae</taxon>
        <taxon>Austrelaps</taxon>
    </lineage>
</organism>
<protein>
    <recommendedName>
        <fullName>Short neurotoxin 1</fullName>
        <shortName>SNTX-1</shortName>
    </recommendedName>
</protein>
<sequence length="81" mass="8949">MKTLLLTLVVVTIVCLDLGYTMTCCNQQSSQPKTTTTCAESSCYKKTWRDHRGTIIERGCGCPNVKPGIQLVCCETNECNN</sequence>
<name>3S11_AUSSU</name>
<reference key="1">
    <citation type="journal article" date="2007" name="Cell. Mol. Life Sci.">
        <title>Distinct activities of novel neurotoxins from Australian venomous snakes for nicotinic acetylcholine receptors.</title>
        <authorList>
            <person name="St Pierre L."/>
            <person name="Fischer H."/>
            <person name="Adams D.J."/>
            <person name="Schenning M."/>
            <person name="Lavidis N."/>
            <person name="de Jersey J."/>
            <person name="Masci P.P."/>
            <person name="Lavin M.F."/>
        </authorList>
    </citation>
    <scope>NUCLEOTIDE SEQUENCE [MRNA]</scope>
    <source>
        <tissue>Venom gland</tissue>
    </source>
</reference>
<proteinExistence type="inferred from homology"/>